<keyword id="KW-0056">Arginine metabolism</keyword>
<keyword id="KW-0378">Hydrolase</keyword>
<keyword id="KW-1185">Reference proteome</keyword>
<proteinExistence type="inferred from homology"/>
<sequence length="441" mass="48522">MKAREVNFDGLVGLTHHYAGLSFGNEASTKHRFQVSNPKLAARQGLAKMKALADAGFPQAVIPPQERPNLAALRQIGFTGSDQQVLEKAWRAAPHLLSAASSASSMWVANAATVCPSADALDGKVHLTVANLNNKFHRASEAPGTERLLRAIFRDESRFAVHGALPQVAMFGDEGAANHNRLGGDYGEPGLQLFIYGREESGALVPARYPARQTLEASQAVARLNQVDPQRVMFAQQNPAVIDQGVFHNDVIAVSNRQVLFCHEHAFLHQQALFDALAEKVPGFTPLVVPAGAVSVQDAVETYLFNSQLLSRDDGTMVLVLPEESRRHEGVWRYLNTLVAADNPISELKVFDLRESMANGGGPACLRLRVVLTDDERQAVNPAVMMDDTLFTRLNAWVDKYYRDRLTQEDLVDPQLLREGREALDELSRLLSLGNVYPFQQ</sequence>
<dbReference type="EC" id="3.5.3.23" evidence="1"/>
<dbReference type="EMBL" id="CP000783">
    <property type="protein sequence ID" value="ABU77403.1"/>
    <property type="molecule type" value="Genomic_DNA"/>
</dbReference>
<dbReference type="RefSeq" id="WP_012125018.1">
    <property type="nucleotide sequence ID" value="NC_009778.1"/>
</dbReference>
<dbReference type="SMR" id="A7MNV7"/>
<dbReference type="KEGG" id="esa:ESA_02154"/>
<dbReference type="PATRIC" id="fig|290339.8.peg.1925"/>
<dbReference type="HOGENOM" id="CLU_053835_0_0_6"/>
<dbReference type="UniPathway" id="UPA00185">
    <property type="reaction ID" value="UER00280"/>
</dbReference>
<dbReference type="Proteomes" id="UP000000260">
    <property type="component" value="Chromosome"/>
</dbReference>
<dbReference type="GO" id="GO:0009015">
    <property type="term" value="F:N-succinylarginine dihydrolase activity"/>
    <property type="evidence" value="ECO:0007669"/>
    <property type="project" value="UniProtKB-UniRule"/>
</dbReference>
<dbReference type="GO" id="GO:0019544">
    <property type="term" value="P:arginine catabolic process to glutamate"/>
    <property type="evidence" value="ECO:0007669"/>
    <property type="project" value="UniProtKB-UniRule"/>
</dbReference>
<dbReference type="GO" id="GO:0019545">
    <property type="term" value="P:arginine catabolic process to succinate"/>
    <property type="evidence" value="ECO:0007669"/>
    <property type="project" value="UniProtKB-UniRule"/>
</dbReference>
<dbReference type="FunFam" id="3.75.10.20:FF:000001">
    <property type="entry name" value="N-succinylarginine dihydrolase"/>
    <property type="match status" value="1"/>
</dbReference>
<dbReference type="Gene3D" id="3.75.10.20">
    <property type="entry name" value="Succinylarginine dihydrolase"/>
    <property type="match status" value="1"/>
</dbReference>
<dbReference type="HAMAP" id="MF_01172">
    <property type="entry name" value="AstB"/>
    <property type="match status" value="1"/>
</dbReference>
<dbReference type="InterPro" id="IPR037031">
    <property type="entry name" value="AstB_sf"/>
</dbReference>
<dbReference type="InterPro" id="IPR007079">
    <property type="entry name" value="SuccinylArg_d-Hdrlase_AstB"/>
</dbReference>
<dbReference type="NCBIfam" id="TIGR03241">
    <property type="entry name" value="arg_catab_astB"/>
    <property type="match status" value="1"/>
</dbReference>
<dbReference type="NCBIfam" id="NF009789">
    <property type="entry name" value="PRK13281.1"/>
    <property type="match status" value="1"/>
</dbReference>
<dbReference type="PANTHER" id="PTHR30420">
    <property type="entry name" value="N-SUCCINYLARGININE DIHYDROLASE"/>
    <property type="match status" value="1"/>
</dbReference>
<dbReference type="PANTHER" id="PTHR30420:SF2">
    <property type="entry name" value="N-SUCCINYLARGININE DIHYDROLASE"/>
    <property type="match status" value="1"/>
</dbReference>
<dbReference type="Pfam" id="PF04996">
    <property type="entry name" value="AstB"/>
    <property type="match status" value="1"/>
</dbReference>
<dbReference type="SUPFAM" id="SSF55909">
    <property type="entry name" value="Pentein"/>
    <property type="match status" value="1"/>
</dbReference>
<gene>
    <name evidence="1" type="primary">astB</name>
    <name type="ordered locus">ESA_02154</name>
</gene>
<comment type="function">
    <text evidence="1">Catalyzes the hydrolysis of N(2)-succinylarginine into N(2)-succinylornithine, ammonia and CO(2).</text>
</comment>
<comment type="catalytic activity">
    <reaction evidence="1">
        <text>N(2)-succinyl-L-arginine + 2 H2O + 2 H(+) = N(2)-succinyl-L-ornithine + 2 NH4(+) + CO2</text>
        <dbReference type="Rhea" id="RHEA:19533"/>
        <dbReference type="ChEBI" id="CHEBI:15377"/>
        <dbReference type="ChEBI" id="CHEBI:15378"/>
        <dbReference type="ChEBI" id="CHEBI:16526"/>
        <dbReference type="ChEBI" id="CHEBI:28938"/>
        <dbReference type="ChEBI" id="CHEBI:58241"/>
        <dbReference type="ChEBI" id="CHEBI:58514"/>
        <dbReference type="EC" id="3.5.3.23"/>
    </reaction>
</comment>
<comment type="pathway">
    <text evidence="1">Amino-acid degradation; L-arginine degradation via AST pathway; L-glutamate and succinate from L-arginine: step 2/5.</text>
</comment>
<comment type="subunit">
    <text evidence="1">Homodimer.</text>
</comment>
<comment type="similarity">
    <text evidence="1">Belongs to the succinylarginine dihydrolase family.</text>
</comment>
<organism>
    <name type="scientific">Cronobacter sakazakii (strain ATCC BAA-894)</name>
    <name type="common">Enterobacter sakazakii</name>
    <dbReference type="NCBI Taxonomy" id="290339"/>
    <lineage>
        <taxon>Bacteria</taxon>
        <taxon>Pseudomonadati</taxon>
        <taxon>Pseudomonadota</taxon>
        <taxon>Gammaproteobacteria</taxon>
        <taxon>Enterobacterales</taxon>
        <taxon>Enterobacteriaceae</taxon>
        <taxon>Cronobacter</taxon>
    </lineage>
</organism>
<evidence type="ECO:0000255" key="1">
    <source>
        <dbReference type="HAMAP-Rule" id="MF_01172"/>
    </source>
</evidence>
<name>ASTB_CROS8</name>
<feature type="chain" id="PRO_1000065727" description="N-succinylarginine dihydrolase">
    <location>
        <begin position="1"/>
        <end position="441"/>
    </location>
</feature>
<feature type="active site" evidence="1">
    <location>
        <position position="174"/>
    </location>
</feature>
<feature type="active site" evidence="1">
    <location>
        <position position="248"/>
    </location>
</feature>
<feature type="active site" description="Nucleophile" evidence="1">
    <location>
        <position position="365"/>
    </location>
</feature>
<feature type="binding site" evidence="1">
    <location>
        <begin position="19"/>
        <end position="28"/>
    </location>
    <ligand>
        <name>substrate</name>
    </ligand>
</feature>
<feature type="binding site" evidence="1">
    <location>
        <position position="110"/>
    </location>
    <ligand>
        <name>substrate</name>
    </ligand>
</feature>
<feature type="binding site" evidence="1">
    <location>
        <begin position="137"/>
        <end position="138"/>
    </location>
    <ligand>
        <name>substrate</name>
    </ligand>
</feature>
<feature type="binding site" evidence="1">
    <location>
        <position position="212"/>
    </location>
    <ligand>
        <name>substrate</name>
    </ligand>
</feature>
<feature type="binding site" evidence="1">
    <location>
        <position position="250"/>
    </location>
    <ligand>
        <name>substrate</name>
    </ligand>
</feature>
<feature type="binding site" evidence="1">
    <location>
        <position position="359"/>
    </location>
    <ligand>
        <name>substrate</name>
    </ligand>
</feature>
<accession>A7MNV7</accession>
<protein>
    <recommendedName>
        <fullName evidence="1">N-succinylarginine dihydrolase</fullName>
        <ecNumber evidence="1">3.5.3.23</ecNumber>
    </recommendedName>
</protein>
<reference key="1">
    <citation type="journal article" date="2010" name="PLoS ONE">
        <title>Genome sequence of Cronobacter sakazakii BAA-894 and comparative genomic hybridization analysis with other Cronobacter species.</title>
        <authorList>
            <person name="Kucerova E."/>
            <person name="Clifton S.W."/>
            <person name="Xia X.Q."/>
            <person name="Long F."/>
            <person name="Porwollik S."/>
            <person name="Fulton L."/>
            <person name="Fronick C."/>
            <person name="Minx P."/>
            <person name="Kyung K."/>
            <person name="Warren W."/>
            <person name="Fulton R."/>
            <person name="Feng D."/>
            <person name="Wollam A."/>
            <person name="Shah N."/>
            <person name="Bhonagiri V."/>
            <person name="Nash W.E."/>
            <person name="Hallsworth-Pepin K."/>
            <person name="Wilson R.K."/>
            <person name="McClelland M."/>
            <person name="Forsythe S.J."/>
        </authorList>
    </citation>
    <scope>NUCLEOTIDE SEQUENCE [LARGE SCALE GENOMIC DNA]</scope>
    <source>
        <strain>ATCC BAA-894</strain>
    </source>
</reference>